<evidence type="ECO:0000255" key="1">
    <source>
        <dbReference type="HAMAP-Rule" id="MF_01191"/>
    </source>
</evidence>
<evidence type="ECO:0000305" key="2"/>
<name>YJJB_YERPS</name>
<keyword id="KW-0997">Cell inner membrane</keyword>
<keyword id="KW-1003">Cell membrane</keyword>
<keyword id="KW-0472">Membrane</keyword>
<keyword id="KW-0812">Transmembrane</keyword>
<keyword id="KW-1133">Transmembrane helix</keyword>
<keyword id="KW-0813">Transport</keyword>
<gene>
    <name evidence="1" type="primary">yjjB</name>
    <name type="ordered locus">YPTB0627</name>
</gene>
<reference key="1">
    <citation type="journal article" date="2004" name="Proc. Natl. Acad. Sci. U.S.A.">
        <title>Insights into the evolution of Yersinia pestis through whole-genome comparison with Yersinia pseudotuberculosis.</title>
        <authorList>
            <person name="Chain P.S.G."/>
            <person name="Carniel E."/>
            <person name="Larimer F.W."/>
            <person name="Lamerdin J."/>
            <person name="Stoutland P.O."/>
            <person name="Regala W.M."/>
            <person name="Georgescu A.M."/>
            <person name="Vergez L.M."/>
            <person name="Land M.L."/>
            <person name="Motin V.L."/>
            <person name="Brubaker R.R."/>
            <person name="Fowler J."/>
            <person name="Hinnebusch J."/>
            <person name="Marceau M."/>
            <person name="Medigue C."/>
            <person name="Simonet M."/>
            <person name="Chenal-Francisque V."/>
            <person name="Souza B."/>
            <person name="Dacheux D."/>
            <person name="Elliott J.M."/>
            <person name="Derbise A."/>
            <person name="Hauser L.J."/>
            <person name="Garcia E."/>
        </authorList>
    </citation>
    <scope>NUCLEOTIDE SEQUENCE [LARGE SCALE GENOMIC DNA]</scope>
    <source>
        <strain>IP32953</strain>
    </source>
</reference>
<sequence>MGVSLLWALLQDMVLAAIPALGFAMVFNVPVRALRYCALLGAIGHGSRMLMIHFGMNIELASLVASIMIGVIGINWSRWLLAHPKVFTVAAVIPMFPGISAYTAMISVVEISHLGYSEALMSTMVTNFLKASFIVGALSIGLSLPGLWLYRKRPGV</sequence>
<accession>Q66ER4</accession>
<dbReference type="EMBL" id="BX936398">
    <property type="protein sequence ID" value="CAH19867.1"/>
    <property type="status" value="ALT_INIT"/>
    <property type="molecule type" value="Genomic_DNA"/>
</dbReference>
<dbReference type="RefSeq" id="WP_032466075.1">
    <property type="nucleotide sequence ID" value="NZ_CP009712.1"/>
</dbReference>
<dbReference type="KEGG" id="yps:YPTB0627"/>
<dbReference type="Proteomes" id="UP000001011">
    <property type="component" value="Chromosome"/>
</dbReference>
<dbReference type="GO" id="GO:0005886">
    <property type="term" value="C:plasma membrane"/>
    <property type="evidence" value="ECO:0007669"/>
    <property type="project" value="UniProtKB-SubCell"/>
</dbReference>
<dbReference type="GO" id="GO:0015744">
    <property type="term" value="P:succinate transport"/>
    <property type="evidence" value="ECO:0007669"/>
    <property type="project" value="UniProtKB-UniRule"/>
</dbReference>
<dbReference type="HAMAP" id="MF_01191">
    <property type="entry name" value="YjjB"/>
    <property type="match status" value="1"/>
</dbReference>
<dbReference type="InterPro" id="IPR024528">
    <property type="entry name" value="ThrE_2"/>
</dbReference>
<dbReference type="InterPro" id="IPR050539">
    <property type="entry name" value="ThrE_Dicarb/AminoAcid_Exp"/>
</dbReference>
<dbReference type="InterPro" id="IPR020914">
    <property type="entry name" value="YjjB"/>
</dbReference>
<dbReference type="NCBIfam" id="NF007391">
    <property type="entry name" value="PRK09917.1"/>
    <property type="match status" value="1"/>
</dbReference>
<dbReference type="PANTHER" id="PTHR34390:SF1">
    <property type="entry name" value="SUCCINATE TRANSPORTER SUBUNIT YJJB-RELATED"/>
    <property type="match status" value="1"/>
</dbReference>
<dbReference type="PANTHER" id="PTHR34390">
    <property type="entry name" value="UPF0442 PROTEIN YJJB-RELATED"/>
    <property type="match status" value="1"/>
</dbReference>
<dbReference type="Pfam" id="PF12821">
    <property type="entry name" value="ThrE_2"/>
    <property type="match status" value="1"/>
</dbReference>
<organism>
    <name type="scientific">Yersinia pseudotuberculosis serotype I (strain IP32953)</name>
    <dbReference type="NCBI Taxonomy" id="273123"/>
    <lineage>
        <taxon>Bacteria</taxon>
        <taxon>Pseudomonadati</taxon>
        <taxon>Pseudomonadota</taxon>
        <taxon>Gammaproteobacteria</taxon>
        <taxon>Enterobacterales</taxon>
        <taxon>Yersiniaceae</taxon>
        <taxon>Yersinia</taxon>
    </lineage>
</organism>
<comment type="function">
    <text evidence="1">Involved in succinate export with YjjP. Both proteins are required for export.</text>
</comment>
<comment type="subunit">
    <text evidence="1">The transporter is composed of YjjB and YjjP.</text>
</comment>
<comment type="subcellular location">
    <subcellularLocation>
        <location evidence="1">Cell inner membrane</location>
        <topology evidence="1">Multi-pass membrane protein</topology>
    </subcellularLocation>
</comment>
<comment type="similarity">
    <text evidence="1">Belongs to the ThrE exporter (TC 2.A.79) family.</text>
</comment>
<comment type="sequence caution" evidence="2">
    <conflict type="erroneous initiation">
        <sequence resource="EMBL-CDS" id="CAH19867"/>
    </conflict>
</comment>
<proteinExistence type="inferred from homology"/>
<feature type="chain" id="PRO_0000293685" description="Probable succinate transporter subunit YjjB">
    <location>
        <begin position="1"/>
        <end position="156"/>
    </location>
</feature>
<feature type="transmembrane region" description="Helical" evidence="1">
    <location>
        <begin position="7"/>
        <end position="27"/>
    </location>
</feature>
<feature type="transmembrane region" description="Helical" evidence="1">
    <location>
        <begin position="54"/>
        <end position="74"/>
    </location>
</feature>
<feature type="transmembrane region" description="Helical" evidence="1">
    <location>
        <begin position="86"/>
        <end position="106"/>
    </location>
</feature>
<feature type="transmembrane region" description="Helical" evidence="1">
    <location>
        <begin position="128"/>
        <end position="148"/>
    </location>
</feature>
<protein>
    <recommendedName>
        <fullName evidence="1">Probable succinate transporter subunit YjjB</fullName>
    </recommendedName>
</protein>